<keyword id="KW-0238">DNA-binding</keyword>
<keyword id="KW-0479">Metal-binding</keyword>
<keyword id="KW-0539">Nucleus</keyword>
<keyword id="KW-0677">Repeat</keyword>
<keyword id="KW-0804">Transcription</keyword>
<keyword id="KW-0805">Transcription regulation</keyword>
<keyword id="KW-0862">Zinc</keyword>
<keyword id="KW-0863">Zinc-finger</keyword>
<proteinExistence type="evidence at transcript level"/>
<feature type="chain" id="PRO_0000046926" description="Probable transcription factor Ken">
    <location>
        <begin position="1" status="less than"/>
        <end position="205" status="greater than"/>
    </location>
</feature>
<feature type="zinc finger region" description="C2H2-type 1" evidence="2">
    <location>
        <begin position="106"/>
        <end position="128"/>
    </location>
</feature>
<feature type="zinc finger region" description="C2H2-type 2" evidence="2">
    <location>
        <begin position="134"/>
        <end position="157"/>
    </location>
</feature>
<feature type="zinc finger region" description="C2H2-type 3" evidence="2">
    <location>
        <begin position="173"/>
        <end position="196"/>
    </location>
</feature>
<feature type="non-terminal residue">
    <location>
        <position position="1"/>
    </location>
</feature>
<feature type="non-terminal residue">
    <location>
        <position position="205"/>
    </location>
</feature>
<organism>
    <name type="scientific">Drosophila yakuba</name>
    <name type="common">Fruit fly</name>
    <dbReference type="NCBI Taxonomy" id="7245"/>
    <lineage>
        <taxon>Eukaryota</taxon>
        <taxon>Metazoa</taxon>
        <taxon>Ecdysozoa</taxon>
        <taxon>Arthropoda</taxon>
        <taxon>Hexapoda</taxon>
        <taxon>Insecta</taxon>
        <taxon>Pterygota</taxon>
        <taxon>Neoptera</taxon>
        <taxon>Endopterygota</taxon>
        <taxon>Diptera</taxon>
        <taxon>Brachycera</taxon>
        <taxon>Muscomorpha</taxon>
        <taxon>Ephydroidea</taxon>
        <taxon>Drosophilidae</taxon>
        <taxon>Drosophila</taxon>
        <taxon>Sophophora</taxon>
    </lineage>
</organism>
<protein>
    <recommendedName>
        <fullName>Probable transcription factor Ken</fullName>
    </recommendedName>
    <alternativeName>
        <fullName>Protein Ken and Barbie</fullName>
    </alternativeName>
</protein>
<reference key="1">
    <citation type="journal article" date="2003" name="Genome Res.">
        <title>An evolutionary analysis of orphan genes in Drosophila.</title>
        <authorList>
            <person name="Domazet-Loso T."/>
            <person name="Tautz D."/>
        </authorList>
    </citation>
    <scope>NUCLEOTIDE SEQUENCE [MRNA]</scope>
</reference>
<dbReference type="EMBL" id="AY231891">
    <property type="protein sequence ID" value="AAR09914.1"/>
    <property type="molecule type" value="mRNA"/>
</dbReference>
<dbReference type="SMR" id="P60319"/>
<dbReference type="eggNOG" id="KOG1721">
    <property type="taxonomic scope" value="Eukaryota"/>
</dbReference>
<dbReference type="OrthoDB" id="8117402at2759"/>
<dbReference type="GO" id="GO:0005634">
    <property type="term" value="C:nucleus"/>
    <property type="evidence" value="ECO:0007669"/>
    <property type="project" value="UniProtKB-SubCell"/>
</dbReference>
<dbReference type="GO" id="GO:0003700">
    <property type="term" value="F:DNA-binding transcription factor activity"/>
    <property type="evidence" value="ECO:0007669"/>
    <property type="project" value="EnsemblMetazoa"/>
</dbReference>
<dbReference type="GO" id="GO:0000978">
    <property type="term" value="F:RNA polymerase II cis-regulatory region sequence-specific DNA binding"/>
    <property type="evidence" value="ECO:0007669"/>
    <property type="project" value="TreeGrafter"/>
</dbReference>
<dbReference type="GO" id="GO:0008270">
    <property type="term" value="F:zinc ion binding"/>
    <property type="evidence" value="ECO:0007669"/>
    <property type="project" value="UniProtKB-KW"/>
</dbReference>
<dbReference type="GO" id="GO:0045497">
    <property type="term" value="P:female analia development"/>
    <property type="evidence" value="ECO:0007669"/>
    <property type="project" value="EnsemblMetazoa"/>
</dbReference>
<dbReference type="GO" id="GO:0030540">
    <property type="term" value="P:female genitalia development"/>
    <property type="evidence" value="ECO:0007669"/>
    <property type="project" value="EnsemblMetazoa"/>
</dbReference>
<dbReference type="GO" id="GO:0045496">
    <property type="term" value="P:male analia development"/>
    <property type="evidence" value="ECO:0007669"/>
    <property type="project" value="EnsemblMetazoa"/>
</dbReference>
<dbReference type="GO" id="GO:0030539">
    <property type="term" value="P:male genitalia development"/>
    <property type="evidence" value="ECO:0007669"/>
    <property type="project" value="EnsemblMetazoa"/>
</dbReference>
<dbReference type="GO" id="GO:0046426">
    <property type="term" value="P:negative regulation of receptor signaling pathway via JAK-STAT"/>
    <property type="evidence" value="ECO:0007669"/>
    <property type="project" value="EnsemblMetazoa"/>
</dbReference>
<dbReference type="GO" id="GO:0006357">
    <property type="term" value="P:regulation of transcription by RNA polymerase II"/>
    <property type="evidence" value="ECO:0007669"/>
    <property type="project" value="TreeGrafter"/>
</dbReference>
<dbReference type="FunFam" id="3.30.160.60:FF:002034">
    <property type="entry name" value="transcription factor Ken"/>
    <property type="match status" value="1"/>
</dbReference>
<dbReference type="FunFam" id="3.30.160.60:FF:002059">
    <property type="entry name" value="transcription factor Ken"/>
    <property type="match status" value="1"/>
</dbReference>
<dbReference type="Gene3D" id="3.30.160.60">
    <property type="entry name" value="Classic Zinc Finger"/>
    <property type="match status" value="2"/>
</dbReference>
<dbReference type="InterPro" id="IPR051497">
    <property type="entry name" value="Dev/Hematopoietic_TF"/>
</dbReference>
<dbReference type="InterPro" id="IPR036236">
    <property type="entry name" value="Znf_C2H2_sf"/>
</dbReference>
<dbReference type="InterPro" id="IPR013087">
    <property type="entry name" value="Znf_C2H2_type"/>
</dbReference>
<dbReference type="PANTHER" id="PTHR45993">
    <property type="entry name" value="B-CELL LYMPHOMA/LEUKEMIA 11"/>
    <property type="match status" value="1"/>
</dbReference>
<dbReference type="PANTHER" id="PTHR45993:SF7">
    <property type="entry name" value="TRANSCRIPTION FACTOR KEN"/>
    <property type="match status" value="1"/>
</dbReference>
<dbReference type="Pfam" id="PF00096">
    <property type="entry name" value="zf-C2H2"/>
    <property type="match status" value="1"/>
</dbReference>
<dbReference type="SMART" id="SM00355">
    <property type="entry name" value="ZnF_C2H2"/>
    <property type="match status" value="3"/>
</dbReference>
<dbReference type="SUPFAM" id="SSF57667">
    <property type="entry name" value="beta-beta-alpha zinc fingers"/>
    <property type="match status" value="1"/>
</dbReference>
<dbReference type="PROSITE" id="PS00028">
    <property type="entry name" value="ZINC_FINGER_C2H2_1"/>
    <property type="match status" value="3"/>
</dbReference>
<dbReference type="PROSITE" id="PS50157">
    <property type="entry name" value="ZINC_FINGER_C2H2_2"/>
    <property type="match status" value="2"/>
</dbReference>
<comment type="function">
    <text evidence="1">Probable transcription factor, which is required for terminalia development.</text>
</comment>
<comment type="subcellular location">
    <subcellularLocation>
        <location evidence="3">Nucleus</location>
    </subcellularLocation>
</comment>
<gene>
    <name type="primary">ken</name>
</gene>
<sequence length="205" mass="22896">NMLAHLEDGALNGDTLTPDRKHLLEAQRNRAHSPEMPMHLGPQFVYQWQSNQNAAMSAMPNLQSRLSSLSHISLNLDHPEGRSGSASGSAANLAGSNTHASSVREYRCEYCGKQFGMSWNLKTHLRVHTGEKPFACRLCVAMFKQKAHLLKHLCSVHRNVITTTNGADTENRYSCCFCSMCFESVQELVRHLSGHHNNLLLTKNL</sequence>
<evidence type="ECO:0000250" key="1"/>
<evidence type="ECO:0000255" key="2">
    <source>
        <dbReference type="PROSITE-ProRule" id="PRU00042"/>
    </source>
</evidence>
<evidence type="ECO:0000305" key="3"/>
<accession>P60319</accession>
<name>KEN_DROYA</name>